<feature type="chain" id="PRO_1000142993" description="Large ribosomal subunit protein uL16">
    <location>
        <begin position="1"/>
        <end position="144"/>
    </location>
</feature>
<proteinExistence type="inferred from homology"/>
<protein>
    <recommendedName>
        <fullName evidence="1">Large ribosomal subunit protein uL16</fullName>
    </recommendedName>
    <alternativeName>
        <fullName evidence="2">50S ribosomal protein L16</fullName>
    </alternativeName>
</protein>
<sequence>MLLPKRVKYRREHRGNMRGEAKGGKEVSFGEWGLQAQTASWITNRQIESARIAMTRYMKRGGKVWIKIFPHKPYTKKPLEVRMGSGKGSPEGWVAVVKPGKIMFEIAGVSEEVAREALRLASHKLPVKCKIVKRQETGGESNES</sequence>
<dbReference type="EMBL" id="CP000817">
    <property type="protein sequence ID" value="ACA42051.1"/>
    <property type="molecule type" value="Genomic_DNA"/>
</dbReference>
<dbReference type="RefSeq" id="WP_012296060.1">
    <property type="nucleotide sequence ID" value="NC_010382.1"/>
</dbReference>
<dbReference type="SMR" id="B1HMX3"/>
<dbReference type="EnsemblBacteria" id="ACA42051">
    <property type="protein sequence ID" value="ACA42051"/>
    <property type="gene ID" value="Bsph_4607"/>
</dbReference>
<dbReference type="KEGG" id="lsp:Bsph_4607"/>
<dbReference type="HOGENOM" id="CLU_078858_2_1_9"/>
<dbReference type="Proteomes" id="UP000002164">
    <property type="component" value="Chromosome"/>
</dbReference>
<dbReference type="GO" id="GO:0022625">
    <property type="term" value="C:cytosolic large ribosomal subunit"/>
    <property type="evidence" value="ECO:0007669"/>
    <property type="project" value="TreeGrafter"/>
</dbReference>
<dbReference type="GO" id="GO:0019843">
    <property type="term" value="F:rRNA binding"/>
    <property type="evidence" value="ECO:0007669"/>
    <property type="project" value="UniProtKB-UniRule"/>
</dbReference>
<dbReference type="GO" id="GO:0003735">
    <property type="term" value="F:structural constituent of ribosome"/>
    <property type="evidence" value="ECO:0007669"/>
    <property type="project" value="InterPro"/>
</dbReference>
<dbReference type="GO" id="GO:0000049">
    <property type="term" value="F:tRNA binding"/>
    <property type="evidence" value="ECO:0007669"/>
    <property type="project" value="UniProtKB-KW"/>
</dbReference>
<dbReference type="GO" id="GO:0006412">
    <property type="term" value="P:translation"/>
    <property type="evidence" value="ECO:0007669"/>
    <property type="project" value="UniProtKB-UniRule"/>
</dbReference>
<dbReference type="CDD" id="cd01433">
    <property type="entry name" value="Ribosomal_L16_L10e"/>
    <property type="match status" value="1"/>
</dbReference>
<dbReference type="FunFam" id="3.90.1170.10:FF:000001">
    <property type="entry name" value="50S ribosomal protein L16"/>
    <property type="match status" value="1"/>
</dbReference>
<dbReference type="Gene3D" id="3.90.1170.10">
    <property type="entry name" value="Ribosomal protein L10e/L16"/>
    <property type="match status" value="1"/>
</dbReference>
<dbReference type="HAMAP" id="MF_01342">
    <property type="entry name" value="Ribosomal_uL16"/>
    <property type="match status" value="1"/>
</dbReference>
<dbReference type="InterPro" id="IPR047873">
    <property type="entry name" value="Ribosomal_uL16"/>
</dbReference>
<dbReference type="InterPro" id="IPR000114">
    <property type="entry name" value="Ribosomal_uL16_bact-type"/>
</dbReference>
<dbReference type="InterPro" id="IPR020798">
    <property type="entry name" value="Ribosomal_uL16_CS"/>
</dbReference>
<dbReference type="InterPro" id="IPR016180">
    <property type="entry name" value="Ribosomal_uL16_dom"/>
</dbReference>
<dbReference type="InterPro" id="IPR036920">
    <property type="entry name" value="Ribosomal_uL16_sf"/>
</dbReference>
<dbReference type="NCBIfam" id="TIGR01164">
    <property type="entry name" value="rplP_bact"/>
    <property type="match status" value="1"/>
</dbReference>
<dbReference type="PANTHER" id="PTHR12220">
    <property type="entry name" value="50S/60S RIBOSOMAL PROTEIN L16"/>
    <property type="match status" value="1"/>
</dbReference>
<dbReference type="PANTHER" id="PTHR12220:SF13">
    <property type="entry name" value="LARGE RIBOSOMAL SUBUNIT PROTEIN UL16M"/>
    <property type="match status" value="1"/>
</dbReference>
<dbReference type="Pfam" id="PF00252">
    <property type="entry name" value="Ribosomal_L16"/>
    <property type="match status" value="1"/>
</dbReference>
<dbReference type="PRINTS" id="PR00060">
    <property type="entry name" value="RIBOSOMALL16"/>
</dbReference>
<dbReference type="SUPFAM" id="SSF54686">
    <property type="entry name" value="Ribosomal protein L16p/L10e"/>
    <property type="match status" value="1"/>
</dbReference>
<dbReference type="PROSITE" id="PS00586">
    <property type="entry name" value="RIBOSOMAL_L16_1"/>
    <property type="match status" value="1"/>
</dbReference>
<dbReference type="PROSITE" id="PS00701">
    <property type="entry name" value="RIBOSOMAL_L16_2"/>
    <property type="match status" value="1"/>
</dbReference>
<name>RL16_LYSSC</name>
<reference key="1">
    <citation type="journal article" date="2008" name="J. Bacteriol.">
        <title>Complete genome sequence of the mosquitocidal bacterium Bacillus sphaericus C3-41 and comparison with those of closely related Bacillus species.</title>
        <authorList>
            <person name="Hu X."/>
            <person name="Fan W."/>
            <person name="Han B."/>
            <person name="Liu H."/>
            <person name="Zheng D."/>
            <person name="Li Q."/>
            <person name="Dong W."/>
            <person name="Yan J."/>
            <person name="Gao M."/>
            <person name="Berry C."/>
            <person name="Yuan Z."/>
        </authorList>
    </citation>
    <scope>NUCLEOTIDE SEQUENCE [LARGE SCALE GENOMIC DNA]</scope>
    <source>
        <strain>C3-41</strain>
    </source>
</reference>
<accession>B1HMX3</accession>
<comment type="function">
    <text evidence="1">Binds 23S rRNA and is also seen to make contacts with the A and possibly P site tRNAs.</text>
</comment>
<comment type="subunit">
    <text evidence="1">Part of the 50S ribosomal subunit.</text>
</comment>
<comment type="similarity">
    <text evidence="1">Belongs to the universal ribosomal protein uL16 family.</text>
</comment>
<gene>
    <name evidence="1" type="primary">rplP</name>
    <name type="ordered locus">Bsph_4607</name>
</gene>
<organism>
    <name type="scientific">Lysinibacillus sphaericus (strain C3-41)</name>
    <dbReference type="NCBI Taxonomy" id="444177"/>
    <lineage>
        <taxon>Bacteria</taxon>
        <taxon>Bacillati</taxon>
        <taxon>Bacillota</taxon>
        <taxon>Bacilli</taxon>
        <taxon>Bacillales</taxon>
        <taxon>Bacillaceae</taxon>
        <taxon>Lysinibacillus</taxon>
    </lineage>
</organism>
<keyword id="KW-0687">Ribonucleoprotein</keyword>
<keyword id="KW-0689">Ribosomal protein</keyword>
<keyword id="KW-0694">RNA-binding</keyword>
<keyword id="KW-0699">rRNA-binding</keyword>
<keyword id="KW-0820">tRNA-binding</keyword>
<evidence type="ECO:0000255" key="1">
    <source>
        <dbReference type="HAMAP-Rule" id="MF_01342"/>
    </source>
</evidence>
<evidence type="ECO:0000305" key="2"/>